<organismHost>
    <name type="scientific">Homo sapiens</name>
    <name type="common">Human</name>
    <dbReference type="NCBI Taxonomy" id="9606"/>
</organismHost>
<dbReference type="EC" id="1.17.4.1"/>
<dbReference type="EMBL" id="X67119">
    <property type="protein sequence ID" value="CAA47558.1"/>
    <property type="molecule type" value="Genomic_DNA"/>
</dbReference>
<dbReference type="EMBL" id="X69198">
    <property type="protein sequence ID" value="CAA48999.1"/>
    <property type="molecule type" value="Genomic_DNA"/>
</dbReference>
<dbReference type="PIR" id="B36843">
    <property type="entry name" value="B36843"/>
</dbReference>
<dbReference type="RefSeq" id="NP_042102.1">
    <property type="nucleotide sequence ID" value="NC_001611.1"/>
</dbReference>
<dbReference type="SMR" id="P0DSV1"/>
<dbReference type="GeneID" id="1486459"/>
<dbReference type="KEGG" id="vg:1486459"/>
<dbReference type="Proteomes" id="UP000002060">
    <property type="component" value="Segment"/>
</dbReference>
<dbReference type="GO" id="GO:0005524">
    <property type="term" value="F:ATP binding"/>
    <property type="evidence" value="ECO:0007669"/>
    <property type="project" value="UniProtKB-KW"/>
</dbReference>
<dbReference type="GO" id="GO:0004748">
    <property type="term" value="F:ribonucleoside-diphosphate reductase activity, thioredoxin disulfide as acceptor"/>
    <property type="evidence" value="ECO:0007669"/>
    <property type="project" value="UniProtKB-EC"/>
</dbReference>
<dbReference type="GO" id="GO:0009263">
    <property type="term" value="P:deoxyribonucleotide biosynthetic process"/>
    <property type="evidence" value="ECO:0007669"/>
    <property type="project" value="UniProtKB-KW"/>
</dbReference>
<dbReference type="CDD" id="cd01679">
    <property type="entry name" value="RNR_I"/>
    <property type="match status" value="1"/>
</dbReference>
<dbReference type="FunFam" id="3.20.70.20:FF:000010">
    <property type="entry name" value="Ribonucleoside-diphosphate reductase"/>
    <property type="match status" value="1"/>
</dbReference>
<dbReference type="Gene3D" id="3.20.70.20">
    <property type="match status" value="1"/>
</dbReference>
<dbReference type="InterPro" id="IPR005144">
    <property type="entry name" value="ATP-cone_dom"/>
</dbReference>
<dbReference type="InterPro" id="IPR013346">
    <property type="entry name" value="NrdE_NrdA_C"/>
</dbReference>
<dbReference type="InterPro" id="IPR000788">
    <property type="entry name" value="RNR_lg_C"/>
</dbReference>
<dbReference type="InterPro" id="IPR013509">
    <property type="entry name" value="RNR_lsu_N"/>
</dbReference>
<dbReference type="InterPro" id="IPR008926">
    <property type="entry name" value="RNR_R1-su_N"/>
</dbReference>
<dbReference type="InterPro" id="IPR039718">
    <property type="entry name" value="Rrm1"/>
</dbReference>
<dbReference type="NCBIfam" id="TIGR02506">
    <property type="entry name" value="NrdE_NrdA"/>
    <property type="match status" value="1"/>
</dbReference>
<dbReference type="PANTHER" id="PTHR11573">
    <property type="entry name" value="RIBONUCLEOSIDE-DIPHOSPHATE REDUCTASE LARGE CHAIN"/>
    <property type="match status" value="1"/>
</dbReference>
<dbReference type="PANTHER" id="PTHR11573:SF6">
    <property type="entry name" value="RIBONUCLEOSIDE-DIPHOSPHATE REDUCTASE LARGE SUBUNIT"/>
    <property type="match status" value="1"/>
</dbReference>
<dbReference type="Pfam" id="PF03477">
    <property type="entry name" value="ATP-cone"/>
    <property type="match status" value="1"/>
</dbReference>
<dbReference type="Pfam" id="PF02867">
    <property type="entry name" value="Ribonuc_red_lgC"/>
    <property type="match status" value="1"/>
</dbReference>
<dbReference type="Pfam" id="PF00317">
    <property type="entry name" value="Ribonuc_red_lgN"/>
    <property type="match status" value="1"/>
</dbReference>
<dbReference type="PRINTS" id="PR01183">
    <property type="entry name" value="RIBORDTASEM1"/>
</dbReference>
<dbReference type="SUPFAM" id="SSF51998">
    <property type="entry name" value="PFL-like glycyl radical enzymes"/>
    <property type="match status" value="1"/>
</dbReference>
<dbReference type="SUPFAM" id="SSF48168">
    <property type="entry name" value="R1 subunit of ribonucleotide reductase, N-terminal domain"/>
    <property type="match status" value="1"/>
</dbReference>
<dbReference type="PROSITE" id="PS51161">
    <property type="entry name" value="ATP_CONE"/>
    <property type="match status" value="1"/>
</dbReference>
<dbReference type="PROSITE" id="PS00089">
    <property type="entry name" value="RIBORED_LARGE"/>
    <property type="match status" value="1"/>
</dbReference>
<reference key="1">
    <citation type="journal article" date="1993" name="Virus Res.">
        <title>Analysis of the nucleotide sequence of a 43 kbp segment of the genome of variola virus India-1967 strain.</title>
        <authorList>
            <person name="Shchelkunov S.N."/>
            <person name="Blinov V.M."/>
            <person name="Resenchuk S.M."/>
            <person name="Totmenin A.V."/>
            <person name="Sandakhchiev L.S."/>
        </authorList>
    </citation>
    <scope>NUCLEOTIDE SEQUENCE [GENOMIC DNA]</scope>
</reference>
<reference key="2">
    <citation type="journal article" date="1993" name="Virus Res.">
        <title>Nucleotide sequence analysis of variola virus HindIII M, L, I genome fragments.</title>
        <authorList>
            <person name="Shchelkunov S.N."/>
            <person name="Blinov V.M."/>
            <person name="Totmenin A.V."/>
            <person name="Marennikova S.S."/>
            <person name="Kolykhalov A.A."/>
            <person name="Frolov I.V."/>
            <person name="Chizhikov V.E."/>
            <person name="Gytorov V.V."/>
            <person name="Gashikov P.V."/>
            <person name="Belanov E.F."/>
            <person name="Belavin P.A."/>
            <person name="Resenchuk S.M."/>
            <person name="Andzhaparidze O.G."/>
            <person name="Sandakhchiev L.S."/>
        </authorList>
    </citation>
    <scope>NUCLEOTIDE SEQUENCE [GENOMIC DNA]</scope>
</reference>
<reference key="3">
    <citation type="journal article" date="1993" name="FEBS Lett.">
        <title>Genes of variola and vaccinia viruses necessary to overcome the host protective mechanisms.</title>
        <authorList>
            <person name="Shchelkunov S.N."/>
            <person name="Blinov V.M."/>
            <person name="Sandakhchiev L.S."/>
        </authorList>
    </citation>
    <scope>NUCLEOTIDE SEQUENCE [GENOMIC DNA]</scope>
</reference>
<feature type="chain" id="PRO_0000187233" description="Ribonucleoside-diphosphate reductase large subunit">
    <location>
        <begin position="1"/>
        <end position="771"/>
    </location>
</feature>
<feature type="domain" description="ATP-cone" evidence="5">
    <location>
        <begin position="1"/>
        <end position="92"/>
    </location>
</feature>
<feature type="active site" description="Proton acceptor" evidence="3">
    <location>
        <position position="427"/>
    </location>
</feature>
<feature type="active site" description="Cysteine radical intermediate" evidence="3">
    <location>
        <position position="429"/>
    </location>
</feature>
<feature type="active site" description="Proton acceptor" evidence="3">
    <location>
        <position position="431"/>
    </location>
</feature>
<feature type="binding site" evidence="4">
    <location>
        <begin position="5"/>
        <end position="6"/>
    </location>
    <ligand>
        <name>ATP</name>
        <dbReference type="ChEBI" id="CHEBI:30616"/>
        <note>allosteric activator</note>
    </ligand>
</feature>
<feature type="binding site" evidence="4">
    <location>
        <begin position="11"/>
        <end position="17"/>
    </location>
    <ligand>
        <name>ATP</name>
        <dbReference type="ChEBI" id="CHEBI:30616"/>
        <note>allosteric activator</note>
    </ligand>
</feature>
<feature type="binding site" evidence="4">
    <location>
        <position position="53"/>
    </location>
    <ligand>
        <name>ATP</name>
        <dbReference type="ChEBI" id="CHEBI:30616"/>
        <note>allosteric activator</note>
    </ligand>
</feature>
<feature type="binding site" evidence="4">
    <location>
        <position position="57"/>
    </location>
    <ligand>
        <name>ATP</name>
        <dbReference type="ChEBI" id="CHEBI:30616"/>
        <note>allosteric activator</note>
    </ligand>
</feature>
<feature type="binding site" evidence="1">
    <location>
        <position position="88"/>
    </location>
    <ligand>
        <name>ATP</name>
        <dbReference type="ChEBI" id="CHEBI:30616"/>
        <note>allosteric activator</note>
    </ligand>
</feature>
<feature type="binding site" evidence="4">
    <location>
        <position position="202"/>
    </location>
    <ligand>
        <name>GDP</name>
        <dbReference type="ChEBI" id="CHEBI:58189"/>
    </ligand>
</feature>
<feature type="binding site" evidence="4">
    <location>
        <position position="217"/>
    </location>
    <ligand>
        <name>GDP</name>
        <dbReference type="ChEBI" id="CHEBI:58189"/>
    </ligand>
</feature>
<feature type="binding site" evidence="4">
    <location>
        <begin position="226"/>
        <end position="228"/>
    </location>
    <ligand>
        <name>dTTP</name>
        <dbReference type="ChEBI" id="CHEBI:37568"/>
        <note>allosteric effector that controls substrate specificity</note>
    </ligand>
</feature>
<feature type="binding site" evidence="4">
    <location>
        <position position="243"/>
    </location>
    <ligand>
        <name>dTTP</name>
        <dbReference type="ChEBI" id="CHEBI:37568"/>
        <note>allosteric effector that controls substrate specificity</note>
    </ligand>
</feature>
<feature type="binding site" evidence="4">
    <location>
        <position position="256"/>
    </location>
    <ligand>
        <name>dTTP</name>
        <dbReference type="ChEBI" id="CHEBI:37568"/>
        <note>allosteric effector that controls substrate specificity</note>
    </ligand>
</feature>
<feature type="binding site" evidence="4">
    <location>
        <position position="427"/>
    </location>
    <ligand>
        <name>GDP</name>
        <dbReference type="ChEBI" id="CHEBI:58189"/>
    </ligand>
</feature>
<feature type="binding site" evidence="4">
    <location>
        <position position="431"/>
    </location>
    <ligand>
        <name>GDP</name>
        <dbReference type="ChEBI" id="CHEBI:58189"/>
    </ligand>
</feature>
<feature type="binding site" evidence="4">
    <location>
        <begin position="603"/>
        <end position="606"/>
    </location>
    <ligand>
        <name>GDP</name>
        <dbReference type="ChEBI" id="CHEBI:58189"/>
    </ligand>
</feature>
<organism>
    <name type="scientific">Variola virus (isolate Human/India/Ind3/1967)</name>
    <name type="common">VARV</name>
    <name type="synonym">Smallpox virus</name>
    <dbReference type="NCBI Taxonomy" id="587200"/>
    <lineage>
        <taxon>Viruses</taxon>
        <taxon>Varidnaviria</taxon>
        <taxon>Bamfordvirae</taxon>
        <taxon>Nucleocytoviricota</taxon>
        <taxon>Pokkesviricetes</taxon>
        <taxon>Chitovirales</taxon>
        <taxon>Poxviridae</taxon>
        <taxon>Chordopoxvirinae</taxon>
        <taxon>Orthopoxvirus</taxon>
        <taxon>Variola virus</taxon>
    </lineage>
</organism>
<evidence type="ECO:0000250" key="1">
    <source>
        <dbReference type="UniProtKB" id="P00452"/>
    </source>
</evidence>
<evidence type="ECO:0000250" key="2">
    <source>
        <dbReference type="UniProtKB" id="P12848"/>
    </source>
</evidence>
<evidence type="ECO:0000250" key="3">
    <source>
        <dbReference type="UniProtKB" id="P21524"/>
    </source>
</evidence>
<evidence type="ECO:0000250" key="4">
    <source>
        <dbReference type="UniProtKB" id="P23921"/>
    </source>
</evidence>
<evidence type="ECO:0000255" key="5">
    <source>
        <dbReference type="PROSITE-ProRule" id="PRU00492"/>
    </source>
</evidence>
<evidence type="ECO:0000305" key="6"/>
<accession>P0DSV1</accession>
<accession>P32984</accession>
<comment type="function">
    <text evidence="2">Ribonucleoside-diphosphate reductase holoenzyme provides the precursors necessary for viral DNA synthesis. Allows virus growth in non-dividing cells. Catalyzes the biosynthesis of deoxyribonucleotides from the corresponding ribonucleotides.</text>
</comment>
<comment type="catalytic activity">
    <reaction evidence="2">
        <text>a 2'-deoxyribonucleoside 5'-diphosphate + [thioredoxin]-disulfide + H2O = a ribonucleoside 5'-diphosphate + [thioredoxin]-dithiol</text>
        <dbReference type="Rhea" id="RHEA:23252"/>
        <dbReference type="Rhea" id="RHEA-COMP:10698"/>
        <dbReference type="Rhea" id="RHEA-COMP:10700"/>
        <dbReference type="ChEBI" id="CHEBI:15377"/>
        <dbReference type="ChEBI" id="CHEBI:29950"/>
        <dbReference type="ChEBI" id="CHEBI:50058"/>
        <dbReference type="ChEBI" id="CHEBI:57930"/>
        <dbReference type="ChEBI" id="CHEBI:73316"/>
        <dbReference type="EC" id="1.17.4.1"/>
    </reaction>
    <physiologicalReaction direction="right-to-left" evidence="2">
        <dbReference type="Rhea" id="RHEA:23254"/>
    </physiologicalReaction>
</comment>
<comment type="cofactor">
    <cofactor evidence="2">
        <name>Mg(2+)</name>
        <dbReference type="ChEBI" id="CHEBI:18420"/>
    </cofactor>
    <text evidence="2">Maximal ribonucleotide reductase activity requires the presence of Mg(2+) ions.</text>
</comment>
<comment type="subunit">
    <text evidence="2">Interacts with RNR2/OPG047 subunit.</text>
</comment>
<comment type="induction">
    <text>Expressed early in the viral replicative cycle.</text>
</comment>
<comment type="similarity">
    <text evidence="6">Belongs to the ribonucleoside diphosphate reductase large chain family.</text>
</comment>
<protein>
    <recommendedName>
        <fullName>Ribonucleoside-diphosphate reductase large subunit</fullName>
        <ecNumber>1.17.4.1</ecNumber>
    </recommendedName>
    <alternativeName>
        <fullName>Ribonucleotide reductase large subunit</fullName>
    </alternativeName>
    <alternativeName>
        <fullName>Ribonucleotide reductase subunit 1</fullName>
        <shortName>RNR1</shortName>
    </alternativeName>
</protein>
<sequence>MFVIKRNGYKENVMFDKITSRIRKLCYGLNTDHIDPIKIAMKVIQGIYNGVTTVELDTLTAEIAATCTTQHPDYAILAARIAVSNLHKETKKLFSEVMKDLFNYVNPKNGKHSPIISSITMDVVNKYKDKLNSVIIYERDFSYNYFGFKTLEKSYLLKINNKIVERPQHMLMRVAVGIHQWDIDSAIETYNLLSEKWFTHASPTLFNAGTSRHQMSSCFLLNMMDDSIEGIYDTLKRCALISKMAGGIGLSISNIRASGSYISGTNGASNGIIPMLRVYNNTARYIDQGGNKRPGVMTIYLEPWHSDIMAFLDLKKNTGNEEHRTRDLFIALWIPDLFMKRVKDDGEWSLMCPDECPGLDNVWGDEFERLYTLYEREKRYKSIIKARVVWKAIIESQIETGTPFILYKDACNKKSNQQNLGTIKCSNLCTEIIQYADANEVAVCNLASIALNMFVIDGQFDFLKLKDVVKVIVRNLNKIIDINYYPIPEAEISNKRHRPIGIGVQGLADAFILLNYPFDSLEAQDLNKKIFETIYYGALEASCELAEKEGPYDTYVGSYASNGILQYDLWNVVPSDLWNWEPLKDKIRTYGLRNSLLVAPMPTASTAQILGNNESVEPYTSNIYTRRVLSGEFQVVNPHLLRVLTERKLWNDEIKNRIMVDGGSIQNTNLPEDIKRVYKTIWEIPQKTIIKMAADRGAFIDQSQSMNIHIADPSYSKLTSMHFYGWSLGLKTGMYYLRTKPASAPIQFTLDKDKIKPLVVCDSEICTSCSG</sequence>
<gene>
    <name type="primary">OPG080</name>
    <name type="ORF">I4L</name>
    <name type="ORF">K4L</name>
    <name type="ORF">ORF3L</name>
</gene>
<proteinExistence type="evidence at transcript level"/>
<name>RIR1_VAR67</name>
<keyword id="KW-0021">Allosteric enzyme</keyword>
<keyword id="KW-0067">ATP-binding</keyword>
<keyword id="KW-0215">Deoxyribonucleotide synthesis</keyword>
<keyword id="KW-0244">Early protein</keyword>
<keyword id="KW-0460">Magnesium</keyword>
<keyword id="KW-0547">Nucleotide-binding</keyword>
<keyword id="KW-0560">Oxidoreductase</keyword>
<keyword id="KW-1185">Reference proteome</keyword>